<protein>
    <recommendedName>
        <fullName evidence="14">LRR receptor kinase SERK2</fullName>
        <ecNumber evidence="14">2.7.11.1</ecNumber>
    </recommendedName>
    <alternativeName>
        <fullName evidence="14">BRI1-associated receptor kinase 1 homolog 2</fullName>
        <shortName evidence="13">OsBAK1-2</shortName>
    </alternativeName>
    <alternativeName>
        <fullName evidence="14">Somatic embryogenesis receptor kinase 2</fullName>
        <shortName evidence="12">OsSERK2</shortName>
    </alternativeName>
</protein>
<comment type="function">
    <text evidence="5 7 9">LRR receptor kinase involved in positive regulation of somatic embryogenesis and defense response against the rice blast fungus pathogen Magnaporthe oryzae (PubMed:15968510). Involved in the positive regulation of receptor kinase-mediated immunity. Required for immunity mediated by the LRR receptor kinases XA21 and XA26/XA3 which recognize effectors from the bacterial pathogen Xanthomonas oryzae pv. oryzae (Xoo). Required for the immune response mediated by the LRR receptor kinase FLS2 which recognizes specifically the bacterial flagellin (flg22) effector. Kinase activity and direct interaction with the immune receptors is critical for their function (PubMed:24482436). Involved in the regulation of plant growth through the brassinosteroid (BR) signaling pathway (PubMed:19754838, PubMed:24482436).</text>
</comment>
<comment type="catalytic activity">
    <reaction evidence="14">
        <text>L-seryl-[protein] + ATP = O-phospho-L-seryl-[protein] + ADP + H(+)</text>
        <dbReference type="Rhea" id="RHEA:17989"/>
        <dbReference type="Rhea" id="RHEA-COMP:9863"/>
        <dbReference type="Rhea" id="RHEA-COMP:11604"/>
        <dbReference type="ChEBI" id="CHEBI:15378"/>
        <dbReference type="ChEBI" id="CHEBI:29999"/>
        <dbReference type="ChEBI" id="CHEBI:30616"/>
        <dbReference type="ChEBI" id="CHEBI:83421"/>
        <dbReference type="ChEBI" id="CHEBI:456216"/>
        <dbReference type="EC" id="2.7.11.1"/>
    </reaction>
</comment>
<comment type="catalytic activity">
    <reaction evidence="14">
        <text>L-threonyl-[protein] + ATP = O-phospho-L-threonyl-[protein] + ADP + H(+)</text>
        <dbReference type="Rhea" id="RHEA:46608"/>
        <dbReference type="Rhea" id="RHEA-COMP:11060"/>
        <dbReference type="Rhea" id="RHEA-COMP:11605"/>
        <dbReference type="ChEBI" id="CHEBI:15378"/>
        <dbReference type="ChEBI" id="CHEBI:30013"/>
        <dbReference type="ChEBI" id="CHEBI:30616"/>
        <dbReference type="ChEBI" id="CHEBI:61977"/>
        <dbReference type="ChEBI" id="CHEBI:456216"/>
        <dbReference type="EC" id="2.7.11.1"/>
    </reaction>
</comment>
<comment type="subunit">
    <text evidence="8 9 10">Interacts with BRI1 (PubMed:22058019, PubMed:24482436). Interacts with XA21, XA26/XA3 and FLS2 (PubMed:25372696).</text>
</comment>
<comment type="subcellular location">
    <subcellularLocation>
        <location evidence="14">Cell membrane</location>
        <topology evidence="1">Single-pass membrane protein</topology>
    </subcellularLocation>
</comment>
<comment type="tissue specificity">
    <text evidence="4 6 9">Expressed in flag leaves (PubMed:11332734). Expressed in roots, shoot apex, leaf blades, leaf sheaths, panicles and flowers (PubMed:16081169). Expressed leaves, stems, sheaths and flowers (PubMed:24482436).</text>
</comment>
<comment type="induction">
    <text evidence="4 5">Induced by infection with the rice blast fungus Magnaporthe oryzae (PubMed:11332734, PubMed:15968510). Induced by salicylate (SA), jasmonate (JA), abscisic acid (ABA) and benzothiadiazole (BTH) (PubMed:15968510).</text>
</comment>
<comment type="PTM">
    <text evidence="9">Autophosphorylated on serine and threonine residues.</text>
</comment>
<comment type="miscellaneous">
    <text evidence="5 9">Plants silencing SERK2 exhibit strong reduction of percentage of shoot regeneration from callus. Plants over-expressing SERK2 show enhanced resistance to the rice blast fungus Magnaporthe oryzae (PubMed:15968510). Plants silencing SERK2 have compromised XA21- and XA3/XA26-mediated immunity to the bacterial leaf blight pathogen Xanthomonas oryzae pv. oryzae (Xoo). Plants silencing SERK2 display altered morphology and reduced sensitivity to the hormone brassinolide (PubMed:24482436).</text>
</comment>
<comment type="similarity">
    <text evidence="14">Belongs to the protein kinase superfamily. Ser/Thr protein kinase family.</text>
</comment>
<evidence type="ECO:0000255" key="1"/>
<evidence type="ECO:0000255" key="2">
    <source>
        <dbReference type="PROSITE-ProRule" id="PRU00159"/>
    </source>
</evidence>
<evidence type="ECO:0000255" key="3">
    <source>
        <dbReference type="PROSITE-ProRule" id="PRU00498"/>
    </source>
</evidence>
<evidence type="ECO:0000269" key="4">
    <source>
    </source>
</evidence>
<evidence type="ECO:0000269" key="5">
    <source>
    </source>
</evidence>
<evidence type="ECO:0000269" key="6">
    <source>
    </source>
</evidence>
<evidence type="ECO:0000269" key="7">
    <source>
    </source>
</evidence>
<evidence type="ECO:0000269" key="8">
    <source>
    </source>
</evidence>
<evidence type="ECO:0000269" key="9">
    <source>
    </source>
</evidence>
<evidence type="ECO:0000269" key="10">
    <source>
    </source>
</evidence>
<evidence type="ECO:0000303" key="11">
    <source>
    </source>
</evidence>
<evidence type="ECO:0000303" key="12">
    <source>
    </source>
</evidence>
<evidence type="ECO:0000303" key="13">
    <source>
    </source>
</evidence>
<evidence type="ECO:0000305" key="14"/>
<evidence type="ECO:0000312" key="15">
    <source>
        <dbReference type="EMBL" id="BAF14889.1"/>
    </source>
</evidence>
<evidence type="ECO:0000312" key="16">
    <source>
        <dbReference type="EMBL" id="CAD40895.1"/>
    </source>
</evidence>
<evidence type="ECO:0000312" key="17">
    <source>
        <dbReference type="EMBL" id="EAZ30959.1"/>
    </source>
</evidence>
<evidence type="ECO:0007744" key="18">
    <source>
        <dbReference type="PDB" id="4Q3G"/>
    </source>
</evidence>
<evidence type="ECO:0007744" key="19">
    <source>
        <dbReference type="PDB" id="4Q3I"/>
    </source>
</evidence>
<reference key="1">
    <citation type="journal article" date="2005" name="Planta">
        <title>Rice SERK1 gene positively regulates somatic embryogenesis of cultured cell and host defense response against fungal infection.</title>
        <authorList>
            <person name="Hu H."/>
            <person name="Xiong L."/>
            <person name="Yang Y."/>
        </authorList>
    </citation>
    <scope>NUCLEOTIDE SEQUENCE [MRNA]</scope>
    <scope>FUNCTION</scope>
    <scope>TISSUE SPECIFICITY</scope>
    <scope>INDUCTION</scope>
    <source>
        <strain>cv. Drew</strain>
    </source>
</reference>
<reference key="2">
    <citation type="journal article" date="2002" name="Nature">
        <title>Sequence and analysis of rice chromosome 4.</title>
        <authorList>
            <person name="Feng Q."/>
            <person name="Zhang Y."/>
            <person name="Hao P."/>
            <person name="Wang S."/>
            <person name="Fu G."/>
            <person name="Huang Y."/>
            <person name="Li Y."/>
            <person name="Zhu J."/>
            <person name="Liu Y."/>
            <person name="Hu X."/>
            <person name="Jia P."/>
            <person name="Zhang Y."/>
            <person name="Zhao Q."/>
            <person name="Ying K."/>
            <person name="Yu S."/>
            <person name="Tang Y."/>
            <person name="Weng Q."/>
            <person name="Zhang L."/>
            <person name="Lu Y."/>
            <person name="Mu J."/>
            <person name="Lu Y."/>
            <person name="Zhang L.S."/>
            <person name="Yu Z."/>
            <person name="Fan D."/>
            <person name="Liu X."/>
            <person name="Lu T."/>
            <person name="Li C."/>
            <person name="Wu Y."/>
            <person name="Sun T."/>
            <person name="Lei H."/>
            <person name="Li T."/>
            <person name="Hu H."/>
            <person name="Guan J."/>
            <person name="Wu M."/>
            <person name="Zhang R."/>
            <person name="Zhou B."/>
            <person name="Chen Z."/>
            <person name="Chen L."/>
            <person name="Jin Z."/>
            <person name="Wang R."/>
            <person name="Yin H."/>
            <person name="Cai Z."/>
            <person name="Ren S."/>
            <person name="Lv G."/>
            <person name="Gu W."/>
            <person name="Zhu G."/>
            <person name="Tu Y."/>
            <person name="Jia J."/>
            <person name="Zhang Y."/>
            <person name="Chen J."/>
            <person name="Kang H."/>
            <person name="Chen X."/>
            <person name="Shao C."/>
            <person name="Sun Y."/>
            <person name="Hu Q."/>
            <person name="Zhang X."/>
            <person name="Zhang W."/>
            <person name="Wang L."/>
            <person name="Ding C."/>
            <person name="Sheng H."/>
            <person name="Gu J."/>
            <person name="Chen S."/>
            <person name="Ni L."/>
            <person name="Zhu F."/>
            <person name="Chen W."/>
            <person name="Lan L."/>
            <person name="Lai Y."/>
            <person name="Cheng Z."/>
            <person name="Gu M."/>
            <person name="Jiang J."/>
            <person name="Li J."/>
            <person name="Hong G."/>
            <person name="Xue Y."/>
            <person name="Han B."/>
        </authorList>
    </citation>
    <scope>NUCLEOTIDE SEQUENCE [LARGE SCALE GENOMIC DNA]</scope>
    <source>
        <strain>cv. Nipponbare</strain>
    </source>
</reference>
<reference key="3">
    <citation type="journal article" date="2005" name="Nature">
        <title>The map-based sequence of the rice genome.</title>
        <authorList>
            <consortium name="International rice genome sequencing project (IRGSP)"/>
        </authorList>
    </citation>
    <scope>NUCLEOTIDE SEQUENCE [LARGE SCALE GENOMIC DNA]</scope>
    <source>
        <strain>cv. Nipponbare</strain>
    </source>
</reference>
<reference key="4">
    <citation type="journal article" date="2008" name="Nucleic Acids Res.">
        <title>The rice annotation project database (RAP-DB): 2008 update.</title>
        <authorList>
            <consortium name="The rice annotation project (RAP)"/>
        </authorList>
    </citation>
    <scope>GENOME REANNOTATION</scope>
    <source>
        <strain>cv. Nipponbare</strain>
    </source>
</reference>
<reference key="5">
    <citation type="journal article" date="2013" name="Rice">
        <title>Improvement of the Oryza sativa Nipponbare reference genome using next generation sequence and optical map data.</title>
        <authorList>
            <person name="Kawahara Y."/>
            <person name="de la Bastide M."/>
            <person name="Hamilton J.P."/>
            <person name="Kanamori H."/>
            <person name="McCombie W.R."/>
            <person name="Ouyang S."/>
            <person name="Schwartz D.C."/>
            <person name="Tanaka T."/>
            <person name="Wu J."/>
            <person name="Zhou S."/>
            <person name="Childs K.L."/>
            <person name="Davidson R.M."/>
            <person name="Lin H."/>
            <person name="Quesada-Ocampo L."/>
            <person name="Vaillancourt B."/>
            <person name="Sakai H."/>
            <person name="Lee S.S."/>
            <person name="Kim J."/>
            <person name="Numa H."/>
            <person name="Itoh T."/>
            <person name="Buell C.R."/>
            <person name="Matsumoto T."/>
        </authorList>
    </citation>
    <scope>GENOME REANNOTATION</scope>
    <source>
        <strain>cv. Nipponbare</strain>
    </source>
</reference>
<reference key="6">
    <citation type="journal article" date="2005" name="PLoS Biol.">
        <title>The genomes of Oryza sativa: a history of duplications.</title>
        <authorList>
            <person name="Yu J."/>
            <person name="Wang J."/>
            <person name="Lin W."/>
            <person name="Li S."/>
            <person name="Li H."/>
            <person name="Zhou J."/>
            <person name="Ni P."/>
            <person name="Dong W."/>
            <person name="Hu S."/>
            <person name="Zeng C."/>
            <person name="Zhang J."/>
            <person name="Zhang Y."/>
            <person name="Li R."/>
            <person name="Xu Z."/>
            <person name="Li S."/>
            <person name="Li X."/>
            <person name="Zheng H."/>
            <person name="Cong L."/>
            <person name="Lin L."/>
            <person name="Yin J."/>
            <person name="Geng J."/>
            <person name="Li G."/>
            <person name="Shi J."/>
            <person name="Liu J."/>
            <person name="Lv H."/>
            <person name="Li J."/>
            <person name="Wang J."/>
            <person name="Deng Y."/>
            <person name="Ran L."/>
            <person name="Shi X."/>
            <person name="Wang X."/>
            <person name="Wu Q."/>
            <person name="Li C."/>
            <person name="Ren X."/>
            <person name="Wang J."/>
            <person name="Wang X."/>
            <person name="Li D."/>
            <person name="Liu D."/>
            <person name="Zhang X."/>
            <person name="Ji Z."/>
            <person name="Zhao W."/>
            <person name="Sun Y."/>
            <person name="Zhang Z."/>
            <person name="Bao J."/>
            <person name="Han Y."/>
            <person name="Dong L."/>
            <person name="Ji J."/>
            <person name="Chen P."/>
            <person name="Wu S."/>
            <person name="Liu J."/>
            <person name="Xiao Y."/>
            <person name="Bu D."/>
            <person name="Tan J."/>
            <person name="Yang L."/>
            <person name="Ye C."/>
            <person name="Zhang J."/>
            <person name="Xu J."/>
            <person name="Zhou Y."/>
            <person name="Yu Y."/>
            <person name="Zhang B."/>
            <person name="Zhuang S."/>
            <person name="Wei H."/>
            <person name="Liu B."/>
            <person name="Lei M."/>
            <person name="Yu H."/>
            <person name="Li Y."/>
            <person name="Xu H."/>
            <person name="Wei S."/>
            <person name="He X."/>
            <person name="Fang L."/>
            <person name="Zhang Z."/>
            <person name="Zhang Y."/>
            <person name="Huang X."/>
            <person name="Su Z."/>
            <person name="Tong W."/>
            <person name="Li J."/>
            <person name="Tong Z."/>
            <person name="Li S."/>
            <person name="Ye J."/>
            <person name="Wang L."/>
            <person name="Fang L."/>
            <person name="Lei T."/>
            <person name="Chen C.-S."/>
            <person name="Chen H.-C."/>
            <person name="Xu Z."/>
            <person name="Li H."/>
            <person name="Huang H."/>
            <person name="Zhang F."/>
            <person name="Xu H."/>
            <person name="Li N."/>
            <person name="Zhao C."/>
            <person name="Li S."/>
            <person name="Dong L."/>
            <person name="Huang Y."/>
            <person name="Li L."/>
            <person name="Xi Y."/>
            <person name="Qi Q."/>
            <person name="Li W."/>
            <person name="Zhang B."/>
            <person name="Hu W."/>
            <person name="Zhang Y."/>
            <person name="Tian X."/>
            <person name="Jiao Y."/>
            <person name="Liang X."/>
            <person name="Jin J."/>
            <person name="Gao L."/>
            <person name="Zheng W."/>
            <person name="Hao B."/>
            <person name="Liu S.-M."/>
            <person name="Wang W."/>
            <person name="Yuan L."/>
            <person name="Cao M."/>
            <person name="McDermott J."/>
            <person name="Samudrala R."/>
            <person name="Wang J."/>
            <person name="Wong G.K.-S."/>
            <person name="Yang H."/>
        </authorList>
    </citation>
    <scope>NUCLEOTIDE SEQUENCE [LARGE SCALE GENOMIC DNA]</scope>
    <source>
        <strain>cv. Nipponbare</strain>
    </source>
</reference>
<reference key="7">
    <citation type="journal article" date="2001" name="Mol. Plant Microbe Interact.">
        <title>Identification of defense-related rice genes by suppression subtractive hybridization and differential screening.</title>
        <authorList>
            <person name="Xiong L."/>
            <person name="Lee M.W."/>
            <person name="Qi M."/>
            <person name="Yang Y."/>
        </authorList>
    </citation>
    <scope>INDUCTION BY MAGNAPORTHE ORYZAE</scope>
</reference>
<reference key="8">
    <citation type="journal article" date="2005" name="Biochim. Biophys. Acta">
        <title>Expression of SERK family receptor-like protein kinase genes in rice.</title>
        <authorList>
            <person name="Ito Y."/>
            <person name="Takaya K."/>
            <person name="Kurata N."/>
        </authorList>
    </citation>
    <scope>TISSUE SPECIFICITY</scope>
</reference>
<reference key="9">
    <citation type="journal article" date="2009" name="Plant Biotechnol. J.">
        <title>Engineering OsBAK1 gene as a molecular tool to improve rice architecture for high yield.</title>
        <authorList>
            <person name="Li D."/>
            <person name="Wang L."/>
            <person name="Wang M."/>
            <person name="Xu Y.Y."/>
            <person name="Luo W."/>
            <person name="Liu Y.J."/>
            <person name="Xu Z.H."/>
            <person name="Li J."/>
            <person name="Chong K."/>
        </authorList>
    </citation>
    <scope>FUNCTION</scope>
    <source>
        <strain>cv. Zhonghua 11</strain>
    </source>
</reference>
<reference key="10">
    <citation type="journal article" date="2011" name="Mol. Cells">
        <title>A subset of OsSERK genes, including OsBAK1, affects normal growth and leaf development of rice.</title>
        <authorList>
            <person name="Park H.S."/>
            <person name="Ryu H.Y."/>
            <person name="Kim B.H."/>
            <person name="Kim S.Y."/>
            <person name="Yoon I.S."/>
            <person name="Nam K.H."/>
        </authorList>
    </citation>
    <scope>INTERACTION WITH BRI1</scope>
</reference>
<reference key="11">
    <citation type="journal article" date="2014" name="Mol. Plant">
        <title>An XA21-associated kinase (OsSERK2) regulates immunity mediated by the XA21 and XA3 immune receptors.</title>
        <authorList>
            <person name="Chen X."/>
            <person name="Zuo S."/>
            <person name="Schwessinger B."/>
            <person name="Chern M."/>
            <person name="Canlas P.E."/>
            <person name="Ruan D."/>
            <person name="Zhou X."/>
            <person name="Wang J."/>
            <person name="Daudi A."/>
            <person name="Petzold C.J."/>
            <person name="Heazlewood J.L."/>
            <person name="Ronald P.C."/>
        </authorList>
    </citation>
    <scope>FUNCTION</scope>
    <scope>INTERACTION WITH XA21; XA26/XA3; FLS2 AND BRI1</scope>
    <scope>TISSUE SPECIFICITY</scope>
    <scope>PHOSPHORYLATION AT THR-303; SER-329; THR-350; SER-356; SER-387; THR-463; THR-466; THR-472; SER-615; THR-616 AND SER-625</scope>
</reference>
<reference key="12">
    <citation type="journal article" date="2014" name="Acta Crystallogr. D">
        <title>Structure of the OsSERK2 leucine-rich repeat extracellular domain.</title>
        <authorList>
            <person name="McAndrew R."/>
            <person name="Pruitt R.N."/>
            <person name="Kamita S.G."/>
            <person name="Pereira J.H."/>
            <person name="Majumdar D."/>
            <person name="Hammock B.D."/>
            <person name="Adams P.D."/>
            <person name="Ronald P.C."/>
        </authorList>
    </citation>
    <scope>X-RAY CRYSTALLOGRAPHY (2.35 ANGSTROMS) OF 32-198</scope>
    <scope>GLYCOSYLATION AT ASN-120</scope>
    <scope>DISULFIDE BONDS</scope>
    <scope>MUTAGENESIS OF ASP-128</scope>
</reference>
<name>SERK2_ORYSJ</name>
<proteinExistence type="evidence at protein level"/>
<gene>
    <name evidence="12" type="primary">SERK2</name>
    <name evidence="11" type="synonym">SERK1</name>
    <name evidence="15" type="ordered locus">Os04g0457800</name>
    <name evidence="14" type="ordered locus">LOC_Os04g38480</name>
    <name evidence="17" type="ORF">OsJ_15037</name>
    <name evidence="16" type="ORF">OSJNBa0036B21.13</name>
</gene>
<sequence length="628" mass="69588">MAEARLLRRRRLCLAVPFVWVVAVAVSRVGANTEGDALYSLRQSLKDANNVLQSWDPTLVNPCTWFHVTCNPDNSVIRVDLGNAQLSGALVPQLGQLKNLQYLELYSNNISGTIPNELGNLTNLVSLDLYLNNFTGFIPETLGQLYKLRFLRLNNNSLSGSIPKSLTNITTLQVLDLSNNNLSGEVPSTGSFSLFTPISFANNKDLCGPGTTKPCPGAPPFSPPPPFNPPTPTVSQGDSKTGAIAGGVAAAAALLFAVPAIGFAWWRRRKPEEHFFDVPAEEDPEVHLGQLKRFSLRELQVATDNFSNKNILGRGGFGKVYKGRLADGSLVAVKRLKEERTPGGELQFQTEVEMISMAVHRNLLRLRGFCMTPTERLLVYPYMANGSVASRLRERQPNDPPLEWQTRTRIALGSARGLSYLHDHCDPKIIHRDVKAANILLDEDFEAVVGDFGLAKLMDYKDTHVTTAVRGTIGHIAPEYLSTGKSSEKTDVFGYGIMLLELITGQRAFDLARLANDDDVMLLDWVKGLLKEKKVEMLVDPDLQSGFVEHEVESLIQVALLCTQGSPMDRPKMSEVVRMLEGDGLAERWEEWQKVEVVRQEAELAPRHNDWIVDSTYNLRAMELSGPR</sequence>
<keyword id="KW-0002">3D-structure</keyword>
<keyword id="KW-0067">ATP-binding</keyword>
<keyword id="KW-1070">Brassinosteroid signaling pathway</keyword>
<keyword id="KW-1003">Cell membrane</keyword>
<keyword id="KW-0221">Differentiation</keyword>
<keyword id="KW-0325">Glycoprotein</keyword>
<keyword id="KW-0418">Kinase</keyword>
<keyword id="KW-0433">Leucine-rich repeat</keyword>
<keyword id="KW-0472">Membrane</keyword>
<keyword id="KW-0547">Nucleotide-binding</keyword>
<keyword id="KW-0597">Phosphoprotein</keyword>
<keyword id="KW-0611">Plant defense</keyword>
<keyword id="KW-0675">Receptor</keyword>
<keyword id="KW-1185">Reference proteome</keyword>
<keyword id="KW-0677">Repeat</keyword>
<keyword id="KW-0723">Serine/threonine-protein kinase</keyword>
<keyword id="KW-0732">Signal</keyword>
<keyword id="KW-0808">Transferase</keyword>
<keyword id="KW-0812">Transmembrane</keyword>
<keyword id="KW-1133">Transmembrane helix</keyword>
<feature type="signal peptide" evidence="1">
    <location>
        <begin position="1"/>
        <end position="31"/>
    </location>
</feature>
<feature type="chain" id="PRO_5010508816" description="LRR receptor kinase SERK2">
    <location>
        <begin position="32"/>
        <end position="628"/>
    </location>
</feature>
<feature type="transmembrane region" description="Helical" evidence="1">
    <location>
        <begin position="243"/>
        <end position="263"/>
    </location>
</feature>
<feature type="repeat" description="LRR 1" evidence="1">
    <location>
        <begin position="97"/>
        <end position="121"/>
    </location>
</feature>
<feature type="repeat" description="LRR 2" evidence="1">
    <location>
        <begin position="123"/>
        <end position="144"/>
    </location>
</feature>
<feature type="repeat" description="LRR 3" evidence="1">
    <location>
        <begin position="145"/>
        <end position="169"/>
    </location>
</feature>
<feature type="repeat" description="LRR 4" evidence="1">
    <location>
        <begin position="170"/>
        <end position="194"/>
    </location>
</feature>
<feature type="domain" description="Protein kinase" evidence="2">
    <location>
        <begin position="306"/>
        <end position="593"/>
    </location>
</feature>
<feature type="active site" description="Proton acceptor" evidence="2">
    <location>
        <position position="433"/>
    </location>
</feature>
<feature type="binding site" evidence="2">
    <location>
        <begin position="312"/>
        <end position="320"/>
    </location>
    <ligand>
        <name>ATP</name>
        <dbReference type="ChEBI" id="CHEBI:30616"/>
    </ligand>
</feature>
<feature type="binding site" evidence="2">
    <location>
        <position position="334"/>
    </location>
    <ligand>
        <name>ATP</name>
        <dbReference type="ChEBI" id="CHEBI:30616"/>
    </ligand>
</feature>
<feature type="modified residue" description="Phosphothreonine" evidence="9">
    <location>
        <position position="303"/>
    </location>
</feature>
<feature type="modified residue" description="Phosphoserine" evidence="9">
    <location>
        <position position="329"/>
    </location>
</feature>
<feature type="modified residue" description="Phosphothreonine" evidence="9">
    <location>
        <position position="350"/>
    </location>
</feature>
<feature type="modified residue" description="Phosphoserine" evidence="9">
    <location>
        <position position="356"/>
    </location>
</feature>
<feature type="modified residue" description="Phosphoserine" evidence="9">
    <location>
        <position position="387"/>
    </location>
</feature>
<feature type="modified residue" description="Phosphothreonine" evidence="9">
    <location>
        <position position="463"/>
    </location>
</feature>
<feature type="modified residue" description="Phosphothreonine" evidence="9">
    <location>
        <position position="466"/>
    </location>
</feature>
<feature type="modified residue" description="Phosphothreonine" evidence="9">
    <location>
        <position position="472"/>
    </location>
</feature>
<feature type="modified residue" description="Phosphoserine" evidence="9">
    <location>
        <position position="615"/>
    </location>
</feature>
<feature type="modified residue" description="Phosphothreonine" evidence="9">
    <location>
        <position position="616"/>
    </location>
</feature>
<feature type="modified residue" description="Phosphoserine" evidence="9">
    <location>
        <position position="625"/>
    </location>
</feature>
<feature type="glycosylation site" description="N-linked (GlcNAc...) asparagine" evidence="3">
    <location>
        <position position="109"/>
    </location>
</feature>
<feature type="glycosylation site" description="N-linked (GlcNAc...) asparagine" evidence="3 10 18 19">
    <location>
        <position position="120"/>
    </location>
</feature>
<feature type="glycosylation site" description="N-linked (GlcNAc...) asparagine" evidence="3">
    <location>
        <position position="133"/>
    </location>
</feature>
<feature type="glycosylation site" description="N-linked (GlcNAc...) asparagine" evidence="3">
    <location>
        <position position="155"/>
    </location>
</feature>
<feature type="glycosylation site" description="N-linked (GlcNAc...) asparagine" evidence="3">
    <location>
        <position position="168"/>
    </location>
</feature>
<feature type="glycosylation site" description="N-linked (GlcNAc...) asparagine" evidence="3">
    <location>
        <position position="181"/>
    </location>
</feature>
<feature type="mutagenesis site" description="Abolishes binding capacity to BRI1." evidence="10">
    <original>D</original>
    <variation>N</variation>
    <location>
        <position position="128"/>
    </location>
</feature>
<feature type="sequence conflict" description="In Ref. 1; AAU88198 and 6; EAZ30959." evidence="14" ref="1 6">
    <original>PF</original>
    <variation>AV</variation>
    <location>
        <begin position="17"/>
        <end position="18"/>
    </location>
</feature>
<dbReference type="EC" id="2.7.11.1" evidence="14"/>
<dbReference type="EMBL" id="AY652735">
    <property type="protein sequence ID" value="AAU88198.1"/>
    <property type="molecule type" value="mRNA"/>
</dbReference>
<dbReference type="EMBL" id="AL606636">
    <property type="protein sequence ID" value="CAD40895.1"/>
    <property type="molecule type" value="Genomic_DNA"/>
</dbReference>
<dbReference type="EMBL" id="AP014960">
    <property type="protein sequence ID" value="BAS89517.1"/>
    <property type="molecule type" value="Genomic_DNA"/>
</dbReference>
<dbReference type="EMBL" id="AP008210">
    <property type="protein sequence ID" value="BAF14889.1"/>
    <property type="molecule type" value="Genomic_DNA"/>
</dbReference>
<dbReference type="EMBL" id="CM000141">
    <property type="protein sequence ID" value="EAZ30959.1"/>
    <property type="molecule type" value="Genomic_DNA"/>
</dbReference>
<dbReference type="RefSeq" id="XP_015636497.1">
    <property type="nucleotide sequence ID" value="XM_015781011.1"/>
</dbReference>
<dbReference type="PDB" id="4Q3G">
    <property type="method" value="X-ray"/>
    <property type="resolution" value="2.79 A"/>
    <property type="chains" value="A/B=32-198"/>
</dbReference>
<dbReference type="PDB" id="4Q3I">
    <property type="method" value="X-ray"/>
    <property type="resolution" value="2.35 A"/>
    <property type="chains" value="A/B=32-198"/>
</dbReference>
<dbReference type="PDBsum" id="4Q3G"/>
<dbReference type="PDBsum" id="4Q3I"/>
<dbReference type="SMR" id="Q7XV05"/>
<dbReference type="FunCoup" id="Q7XV05">
    <property type="interactions" value="20"/>
</dbReference>
<dbReference type="STRING" id="39947.Q7XV05"/>
<dbReference type="GlyCosmos" id="Q7XV05">
    <property type="glycosylation" value="6 sites, No reported glycans"/>
</dbReference>
<dbReference type="iPTMnet" id="Q7XV05"/>
<dbReference type="PaxDb" id="39947-Q7XV05"/>
<dbReference type="EnsemblPlants" id="Os04t0457800-01">
    <property type="protein sequence ID" value="Os04t0457800-01"/>
    <property type="gene ID" value="Os04g0457800"/>
</dbReference>
<dbReference type="Gramene" id="Os04t0457800-01">
    <property type="protein sequence ID" value="Os04t0457800-01"/>
    <property type="gene ID" value="Os04g0457800"/>
</dbReference>
<dbReference type="KEGG" id="dosa:Os04g0457800"/>
<dbReference type="KEGG" id="osa:4336035"/>
<dbReference type="eggNOG" id="ENOG502QQ7B">
    <property type="taxonomic scope" value="Eukaryota"/>
</dbReference>
<dbReference type="HOGENOM" id="CLU_000288_92_7_1"/>
<dbReference type="InParanoid" id="Q7XV05"/>
<dbReference type="OMA" id="ASLRWWW"/>
<dbReference type="OrthoDB" id="4062651at2759"/>
<dbReference type="Proteomes" id="UP000000763">
    <property type="component" value="Chromosome 4"/>
</dbReference>
<dbReference type="Proteomes" id="UP000007752">
    <property type="component" value="Chromosome 4"/>
</dbReference>
<dbReference type="Proteomes" id="UP000059680">
    <property type="component" value="Chromosome 4"/>
</dbReference>
<dbReference type="ExpressionAtlas" id="Q7XV05">
    <property type="expression patterns" value="baseline and differential"/>
</dbReference>
<dbReference type="GO" id="GO:0005886">
    <property type="term" value="C:plasma membrane"/>
    <property type="evidence" value="ECO:0007669"/>
    <property type="project" value="UniProtKB-SubCell"/>
</dbReference>
<dbReference type="GO" id="GO:0005524">
    <property type="term" value="F:ATP binding"/>
    <property type="evidence" value="ECO:0007669"/>
    <property type="project" value="UniProtKB-KW"/>
</dbReference>
<dbReference type="GO" id="GO:0106310">
    <property type="term" value="F:protein serine kinase activity"/>
    <property type="evidence" value="ECO:0007669"/>
    <property type="project" value="RHEA"/>
</dbReference>
<dbReference type="GO" id="GO:0004674">
    <property type="term" value="F:protein serine/threonine kinase activity"/>
    <property type="evidence" value="ECO:0007669"/>
    <property type="project" value="UniProtKB-KW"/>
</dbReference>
<dbReference type="GO" id="GO:0009742">
    <property type="term" value="P:brassinosteroid mediated signaling pathway"/>
    <property type="evidence" value="ECO:0000315"/>
    <property type="project" value="UniProtKB"/>
</dbReference>
<dbReference type="GO" id="GO:0030154">
    <property type="term" value="P:cell differentiation"/>
    <property type="evidence" value="ECO:0007669"/>
    <property type="project" value="UniProtKB-KW"/>
</dbReference>
<dbReference type="GO" id="GO:0006952">
    <property type="term" value="P:defense response"/>
    <property type="evidence" value="ECO:0007669"/>
    <property type="project" value="UniProtKB-KW"/>
</dbReference>
<dbReference type="GO" id="GO:0045089">
    <property type="term" value="P:positive regulation of innate immune response"/>
    <property type="evidence" value="ECO:0000315"/>
    <property type="project" value="UniProtKB"/>
</dbReference>
<dbReference type="GO" id="GO:1900150">
    <property type="term" value="P:regulation of defense response to fungus"/>
    <property type="evidence" value="ECO:0000315"/>
    <property type="project" value="UniProtKB"/>
</dbReference>
<dbReference type="GO" id="GO:0040008">
    <property type="term" value="P:regulation of growth"/>
    <property type="evidence" value="ECO:0000315"/>
    <property type="project" value="UniProtKB"/>
</dbReference>
<dbReference type="GO" id="GO:0010262">
    <property type="term" value="P:somatic embryogenesis"/>
    <property type="evidence" value="ECO:0000315"/>
    <property type="project" value="UniProtKB"/>
</dbReference>
<dbReference type="FunFam" id="3.30.200.20:FF:000015">
    <property type="entry name" value="Somatic embryogenesis receptor kinase 1"/>
    <property type="match status" value="1"/>
</dbReference>
<dbReference type="FunFam" id="3.80.10.10:FF:000024">
    <property type="entry name" value="Somatic embryogenesis receptor kinase 1"/>
    <property type="match status" value="1"/>
</dbReference>
<dbReference type="FunFam" id="1.10.510.10:FF:000016">
    <property type="entry name" value="Somatic embryogenesis receptor-like kinase 1"/>
    <property type="match status" value="1"/>
</dbReference>
<dbReference type="Gene3D" id="3.30.200.20">
    <property type="entry name" value="Phosphorylase Kinase, domain 1"/>
    <property type="match status" value="1"/>
</dbReference>
<dbReference type="Gene3D" id="3.80.10.10">
    <property type="entry name" value="Ribonuclease Inhibitor"/>
    <property type="match status" value="1"/>
</dbReference>
<dbReference type="Gene3D" id="1.10.510.10">
    <property type="entry name" value="Transferase(Phosphotransferase) domain 1"/>
    <property type="match status" value="1"/>
</dbReference>
<dbReference type="InterPro" id="IPR011009">
    <property type="entry name" value="Kinase-like_dom_sf"/>
</dbReference>
<dbReference type="InterPro" id="IPR032675">
    <property type="entry name" value="LRR_dom_sf"/>
</dbReference>
<dbReference type="InterPro" id="IPR013210">
    <property type="entry name" value="LRR_N_plant-typ"/>
</dbReference>
<dbReference type="InterPro" id="IPR055414">
    <property type="entry name" value="LRR_R13L4/SHOC2-like"/>
</dbReference>
<dbReference type="InterPro" id="IPR000719">
    <property type="entry name" value="Prot_kinase_dom"/>
</dbReference>
<dbReference type="InterPro" id="IPR017441">
    <property type="entry name" value="Protein_kinase_ATP_BS"/>
</dbReference>
<dbReference type="InterPro" id="IPR001245">
    <property type="entry name" value="Ser-Thr/Tyr_kinase_cat_dom"/>
</dbReference>
<dbReference type="InterPro" id="IPR008271">
    <property type="entry name" value="Ser/Thr_kinase_AS"/>
</dbReference>
<dbReference type="PANTHER" id="PTHR47988">
    <property type="entry name" value="SOMATIC EMBRYOGENESIS RECEPTOR KINASE 1"/>
    <property type="match status" value="1"/>
</dbReference>
<dbReference type="Pfam" id="PF23598">
    <property type="entry name" value="LRR_14"/>
    <property type="match status" value="1"/>
</dbReference>
<dbReference type="Pfam" id="PF08263">
    <property type="entry name" value="LRRNT_2"/>
    <property type="match status" value="1"/>
</dbReference>
<dbReference type="Pfam" id="PF07714">
    <property type="entry name" value="PK_Tyr_Ser-Thr"/>
    <property type="match status" value="1"/>
</dbReference>
<dbReference type="SMART" id="SM00220">
    <property type="entry name" value="S_TKc"/>
    <property type="match status" value="1"/>
</dbReference>
<dbReference type="SUPFAM" id="SSF52058">
    <property type="entry name" value="L domain-like"/>
    <property type="match status" value="1"/>
</dbReference>
<dbReference type="SUPFAM" id="SSF56112">
    <property type="entry name" value="Protein kinase-like (PK-like)"/>
    <property type="match status" value="1"/>
</dbReference>
<dbReference type="PROSITE" id="PS00107">
    <property type="entry name" value="PROTEIN_KINASE_ATP"/>
    <property type="match status" value="1"/>
</dbReference>
<dbReference type="PROSITE" id="PS50011">
    <property type="entry name" value="PROTEIN_KINASE_DOM"/>
    <property type="match status" value="1"/>
</dbReference>
<dbReference type="PROSITE" id="PS00108">
    <property type="entry name" value="PROTEIN_KINASE_ST"/>
    <property type="match status" value="1"/>
</dbReference>
<accession>Q7XV05</accession>
<accession>Q5Y8C8</accession>
<organism>
    <name type="scientific">Oryza sativa subsp. japonica</name>
    <name type="common">Rice</name>
    <dbReference type="NCBI Taxonomy" id="39947"/>
    <lineage>
        <taxon>Eukaryota</taxon>
        <taxon>Viridiplantae</taxon>
        <taxon>Streptophyta</taxon>
        <taxon>Embryophyta</taxon>
        <taxon>Tracheophyta</taxon>
        <taxon>Spermatophyta</taxon>
        <taxon>Magnoliopsida</taxon>
        <taxon>Liliopsida</taxon>
        <taxon>Poales</taxon>
        <taxon>Poaceae</taxon>
        <taxon>BOP clade</taxon>
        <taxon>Oryzoideae</taxon>
        <taxon>Oryzeae</taxon>
        <taxon>Oryzinae</taxon>
        <taxon>Oryza</taxon>
        <taxon>Oryza sativa</taxon>
    </lineage>
</organism>